<protein>
    <recommendedName>
        <fullName evidence="1">DNA ligase</fullName>
        <ecNumber evidence="1">6.5.1.2</ecNumber>
    </recommendedName>
    <alternativeName>
        <fullName evidence="1">Polydeoxyribonucleotide synthase [NAD(+)]</fullName>
    </alternativeName>
</protein>
<proteinExistence type="inferred from homology"/>
<gene>
    <name evidence="1" type="primary">ligA</name>
    <name type="ordered locus">str1554</name>
</gene>
<sequence>MEKRMKELVDKLNQYAKEYYTEDNPSVSDAEYDKLYRELVTLEAEHPELVQADSPTHRVGGLVLDGFEKYQHEYPLYSLQDAFSREELDAFDKRVKSEFPNADYMAELKIDGLSISLTYVDGILQVGATRGDGSVGENITENVKRISDIPLKLDQPLNITVRGECYLPRAEFERINTQRQENGEAEFANPRNAAAGTLRQLDTKVVAERRLATFFYQEASPTERLTQNDVLNEVAELGFSVNPRRIVTSSMDEIWDFIQAVGQDRDHLAYDIDGVVIKVNSLAIQEELGFTVKAPRWAIAYKFPAEEKEAKLLSVDWQVGRTGVVTPTANLTPVQLAGTTVSRATLHNVDYITEKDIRIGDTVIVYKAGDIIPAVLRVVESKRTTQEAMPVPSQCPSCGSGLLHFEDEVALRCINPSCPAQIKEGLIHFASRDAMNISGMGPSVVEKLFKAELVKEVADIYGLNSQDFLQLEGFKEKSAEKLYAAIQASKENSAEKLLYGLGIRHVGAKVSKQLLESFGTIKELASADVQAIAAVDGLGEVIAKSIQRYFAKEEAQVLLKELESYGVNLSYLGQKVADDAILSGKTVVLTGKLEHLKRSEAKAKLEALGAKVTGSVSKKTDLVVAGSDAGSKLEKAQSLGIEVKDEAWLLDL</sequence>
<evidence type="ECO:0000255" key="1">
    <source>
        <dbReference type="HAMAP-Rule" id="MF_01588"/>
    </source>
</evidence>
<dbReference type="EC" id="6.5.1.2" evidence="1"/>
<dbReference type="EMBL" id="CP000024">
    <property type="protein sequence ID" value="AAV63084.1"/>
    <property type="molecule type" value="Genomic_DNA"/>
</dbReference>
<dbReference type="RefSeq" id="WP_011226393.1">
    <property type="nucleotide sequence ID" value="NC_006449.1"/>
</dbReference>
<dbReference type="SMR" id="Q5LYL9"/>
<dbReference type="GeneID" id="66899301"/>
<dbReference type="KEGG" id="stc:str1554"/>
<dbReference type="HOGENOM" id="CLU_007764_2_1_9"/>
<dbReference type="GO" id="GO:0005829">
    <property type="term" value="C:cytosol"/>
    <property type="evidence" value="ECO:0007669"/>
    <property type="project" value="TreeGrafter"/>
</dbReference>
<dbReference type="GO" id="GO:0003677">
    <property type="term" value="F:DNA binding"/>
    <property type="evidence" value="ECO:0007669"/>
    <property type="project" value="InterPro"/>
</dbReference>
<dbReference type="GO" id="GO:0003911">
    <property type="term" value="F:DNA ligase (NAD+) activity"/>
    <property type="evidence" value="ECO:0007669"/>
    <property type="project" value="UniProtKB-UniRule"/>
</dbReference>
<dbReference type="GO" id="GO:0046872">
    <property type="term" value="F:metal ion binding"/>
    <property type="evidence" value="ECO:0007669"/>
    <property type="project" value="UniProtKB-KW"/>
</dbReference>
<dbReference type="GO" id="GO:0006281">
    <property type="term" value="P:DNA repair"/>
    <property type="evidence" value="ECO:0007669"/>
    <property type="project" value="UniProtKB-KW"/>
</dbReference>
<dbReference type="GO" id="GO:0006260">
    <property type="term" value="P:DNA replication"/>
    <property type="evidence" value="ECO:0007669"/>
    <property type="project" value="UniProtKB-KW"/>
</dbReference>
<dbReference type="CDD" id="cd17748">
    <property type="entry name" value="BRCT_DNA_ligase_like"/>
    <property type="match status" value="1"/>
</dbReference>
<dbReference type="CDD" id="cd00114">
    <property type="entry name" value="LIGANc"/>
    <property type="match status" value="1"/>
</dbReference>
<dbReference type="FunFam" id="1.10.150.20:FF:000006">
    <property type="entry name" value="DNA ligase"/>
    <property type="match status" value="1"/>
</dbReference>
<dbReference type="FunFam" id="1.10.150.20:FF:000007">
    <property type="entry name" value="DNA ligase"/>
    <property type="match status" value="1"/>
</dbReference>
<dbReference type="FunFam" id="1.10.287.610:FF:000002">
    <property type="entry name" value="DNA ligase"/>
    <property type="match status" value="1"/>
</dbReference>
<dbReference type="FunFam" id="2.40.50.140:FF:000012">
    <property type="entry name" value="DNA ligase"/>
    <property type="match status" value="1"/>
</dbReference>
<dbReference type="FunFam" id="3.30.470.30:FF:000001">
    <property type="entry name" value="DNA ligase"/>
    <property type="match status" value="1"/>
</dbReference>
<dbReference type="Gene3D" id="6.20.10.30">
    <property type="match status" value="1"/>
</dbReference>
<dbReference type="Gene3D" id="1.10.150.20">
    <property type="entry name" value="5' to 3' exonuclease, C-terminal subdomain"/>
    <property type="match status" value="2"/>
</dbReference>
<dbReference type="Gene3D" id="3.40.50.10190">
    <property type="entry name" value="BRCT domain"/>
    <property type="match status" value="1"/>
</dbReference>
<dbReference type="Gene3D" id="3.30.470.30">
    <property type="entry name" value="DNA ligase/mRNA capping enzyme"/>
    <property type="match status" value="1"/>
</dbReference>
<dbReference type="Gene3D" id="1.10.287.610">
    <property type="entry name" value="Helix hairpin bin"/>
    <property type="match status" value="1"/>
</dbReference>
<dbReference type="Gene3D" id="2.40.50.140">
    <property type="entry name" value="Nucleic acid-binding proteins"/>
    <property type="match status" value="1"/>
</dbReference>
<dbReference type="HAMAP" id="MF_01588">
    <property type="entry name" value="DNA_ligase_A"/>
    <property type="match status" value="1"/>
</dbReference>
<dbReference type="InterPro" id="IPR001357">
    <property type="entry name" value="BRCT_dom"/>
</dbReference>
<dbReference type="InterPro" id="IPR036420">
    <property type="entry name" value="BRCT_dom_sf"/>
</dbReference>
<dbReference type="InterPro" id="IPR041663">
    <property type="entry name" value="DisA/LigA_HHH"/>
</dbReference>
<dbReference type="InterPro" id="IPR001679">
    <property type="entry name" value="DNA_ligase"/>
</dbReference>
<dbReference type="InterPro" id="IPR018239">
    <property type="entry name" value="DNA_ligase_AS"/>
</dbReference>
<dbReference type="InterPro" id="IPR033136">
    <property type="entry name" value="DNA_ligase_CS"/>
</dbReference>
<dbReference type="InterPro" id="IPR013839">
    <property type="entry name" value="DNAligase_adenylation"/>
</dbReference>
<dbReference type="InterPro" id="IPR013840">
    <property type="entry name" value="DNAligase_N"/>
</dbReference>
<dbReference type="InterPro" id="IPR003583">
    <property type="entry name" value="Hlx-hairpin-Hlx_DNA-bd_motif"/>
</dbReference>
<dbReference type="InterPro" id="IPR012340">
    <property type="entry name" value="NA-bd_OB-fold"/>
</dbReference>
<dbReference type="InterPro" id="IPR004150">
    <property type="entry name" value="NAD_DNA_ligase_OB"/>
</dbReference>
<dbReference type="InterPro" id="IPR010994">
    <property type="entry name" value="RuvA_2-like"/>
</dbReference>
<dbReference type="InterPro" id="IPR004149">
    <property type="entry name" value="Znf_DNAligase_C4"/>
</dbReference>
<dbReference type="NCBIfam" id="TIGR00575">
    <property type="entry name" value="dnlj"/>
    <property type="match status" value="1"/>
</dbReference>
<dbReference type="NCBIfam" id="NF005932">
    <property type="entry name" value="PRK07956.1"/>
    <property type="match status" value="1"/>
</dbReference>
<dbReference type="PANTHER" id="PTHR23389">
    <property type="entry name" value="CHROMOSOME TRANSMISSION FIDELITY FACTOR 18"/>
    <property type="match status" value="1"/>
</dbReference>
<dbReference type="PANTHER" id="PTHR23389:SF9">
    <property type="entry name" value="DNA LIGASE"/>
    <property type="match status" value="1"/>
</dbReference>
<dbReference type="Pfam" id="PF00533">
    <property type="entry name" value="BRCT"/>
    <property type="match status" value="1"/>
</dbReference>
<dbReference type="Pfam" id="PF01653">
    <property type="entry name" value="DNA_ligase_aden"/>
    <property type="match status" value="1"/>
</dbReference>
<dbReference type="Pfam" id="PF03120">
    <property type="entry name" value="DNA_ligase_OB"/>
    <property type="match status" value="1"/>
</dbReference>
<dbReference type="Pfam" id="PF03119">
    <property type="entry name" value="DNA_ligase_ZBD"/>
    <property type="match status" value="1"/>
</dbReference>
<dbReference type="Pfam" id="PF12826">
    <property type="entry name" value="HHH_2"/>
    <property type="match status" value="1"/>
</dbReference>
<dbReference type="Pfam" id="PF14520">
    <property type="entry name" value="HHH_5"/>
    <property type="match status" value="1"/>
</dbReference>
<dbReference type="PIRSF" id="PIRSF001604">
    <property type="entry name" value="LigA"/>
    <property type="match status" value="1"/>
</dbReference>
<dbReference type="SMART" id="SM00292">
    <property type="entry name" value="BRCT"/>
    <property type="match status" value="1"/>
</dbReference>
<dbReference type="SMART" id="SM00278">
    <property type="entry name" value="HhH1"/>
    <property type="match status" value="3"/>
</dbReference>
<dbReference type="SMART" id="SM00532">
    <property type="entry name" value="LIGANc"/>
    <property type="match status" value="1"/>
</dbReference>
<dbReference type="SUPFAM" id="SSF52113">
    <property type="entry name" value="BRCT domain"/>
    <property type="match status" value="1"/>
</dbReference>
<dbReference type="SUPFAM" id="SSF56091">
    <property type="entry name" value="DNA ligase/mRNA capping enzyme, catalytic domain"/>
    <property type="match status" value="1"/>
</dbReference>
<dbReference type="SUPFAM" id="SSF50249">
    <property type="entry name" value="Nucleic acid-binding proteins"/>
    <property type="match status" value="1"/>
</dbReference>
<dbReference type="SUPFAM" id="SSF47781">
    <property type="entry name" value="RuvA domain 2-like"/>
    <property type="match status" value="1"/>
</dbReference>
<dbReference type="PROSITE" id="PS50172">
    <property type="entry name" value="BRCT"/>
    <property type="match status" value="1"/>
</dbReference>
<dbReference type="PROSITE" id="PS01055">
    <property type="entry name" value="DNA_LIGASE_N1"/>
    <property type="match status" value="1"/>
</dbReference>
<dbReference type="PROSITE" id="PS01056">
    <property type="entry name" value="DNA_LIGASE_N2"/>
    <property type="match status" value="1"/>
</dbReference>
<comment type="function">
    <text evidence="1">DNA ligase that catalyzes the formation of phosphodiester linkages between 5'-phosphoryl and 3'-hydroxyl groups in double-stranded DNA using NAD as a coenzyme and as the energy source for the reaction. It is essential for DNA replication and repair of damaged DNA.</text>
</comment>
<comment type="catalytic activity">
    <reaction evidence="1">
        <text>NAD(+) + (deoxyribonucleotide)n-3'-hydroxyl + 5'-phospho-(deoxyribonucleotide)m = (deoxyribonucleotide)n+m + AMP + beta-nicotinamide D-nucleotide.</text>
        <dbReference type="EC" id="6.5.1.2"/>
    </reaction>
</comment>
<comment type="cofactor">
    <cofactor evidence="1">
        <name>Mg(2+)</name>
        <dbReference type="ChEBI" id="CHEBI:18420"/>
    </cofactor>
    <cofactor evidence="1">
        <name>Mn(2+)</name>
        <dbReference type="ChEBI" id="CHEBI:29035"/>
    </cofactor>
</comment>
<comment type="similarity">
    <text evidence="1">Belongs to the NAD-dependent DNA ligase family. LigA subfamily.</text>
</comment>
<organism>
    <name type="scientific">Streptococcus thermophilus (strain CNRZ 1066)</name>
    <dbReference type="NCBI Taxonomy" id="299768"/>
    <lineage>
        <taxon>Bacteria</taxon>
        <taxon>Bacillati</taxon>
        <taxon>Bacillota</taxon>
        <taxon>Bacilli</taxon>
        <taxon>Lactobacillales</taxon>
        <taxon>Streptococcaceae</taxon>
        <taxon>Streptococcus</taxon>
    </lineage>
</organism>
<reference key="1">
    <citation type="journal article" date="2004" name="Nat. Biotechnol.">
        <title>Complete sequence and comparative genome analysis of the dairy bacterium Streptococcus thermophilus.</title>
        <authorList>
            <person name="Bolotin A."/>
            <person name="Quinquis B."/>
            <person name="Renault P."/>
            <person name="Sorokin A."/>
            <person name="Ehrlich S.D."/>
            <person name="Kulakauskas S."/>
            <person name="Lapidus A."/>
            <person name="Goltsman E."/>
            <person name="Mazur M."/>
            <person name="Pusch G.D."/>
            <person name="Fonstein M."/>
            <person name="Overbeek R."/>
            <person name="Kyprides N."/>
            <person name="Purnelle B."/>
            <person name="Prozzi D."/>
            <person name="Ngui K."/>
            <person name="Masuy D."/>
            <person name="Hancy F."/>
            <person name="Burteau S."/>
            <person name="Boutry M."/>
            <person name="Delcour J."/>
            <person name="Goffeau A."/>
            <person name="Hols P."/>
        </authorList>
    </citation>
    <scope>NUCLEOTIDE SEQUENCE [LARGE SCALE GENOMIC DNA]</scope>
    <source>
        <strain>CNRZ 1066</strain>
    </source>
</reference>
<feature type="chain" id="PRO_0000313472" description="DNA ligase">
    <location>
        <begin position="1"/>
        <end position="652"/>
    </location>
</feature>
<feature type="domain" description="BRCT" evidence="1">
    <location>
        <begin position="577"/>
        <end position="652"/>
    </location>
</feature>
<feature type="active site" description="N6-AMP-lysine intermediate" evidence="1">
    <location>
        <position position="109"/>
    </location>
</feature>
<feature type="binding site" evidence="1">
    <location>
        <begin position="29"/>
        <end position="33"/>
    </location>
    <ligand>
        <name>NAD(+)</name>
        <dbReference type="ChEBI" id="CHEBI:57540"/>
    </ligand>
</feature>
<feature type="binding site" evidence="1">
    <location>
        <begin position="78"/>
        <end position="79"/>
    </location>
    <ligand>
        <name>NAD(+)</name>
        <dbReference type="ChEBI" id="CHEBI:57540"/>
    </ligand>
</feature>
<feature type="binding site" evidence="1">
    <location>
        <position position="107"/>
    </location>
    <ligand>
        <name>NAD(+)</name>
        <dbReference type="ChEBI" id="CHEBI:57540"/>
    </ligand>
</feature>
<feature type="binding site" evidence="1">
    <location>
        <position position="130"/>
    </location>
    <ligand>
        <name>NAD(+)</name>
        <dbReference type="ChEBI" id="CHEBI:57540"/>
    </ligand>
</feature>
<feature type="binding site" evidence="1">
    <location>
        <position position="164"/>
    </location>
    <ligand>
        <name>NAD(+)</name>
        <dbReference type="ChEBI" id="CHEBI:57540"/>
    </ligand>
</feature>
<feature type="binding site" evidence="1">
    <location>
        <position position="278"/>
    </location>
    <ligand>
        <name>NAD(+)</name>
        <dbReference type="ChEBI" id="CHEBI:57540"/>
    </ligand>
</feature>
<feature type="binding site" evidence="1">
    <location>
        <position position="302"/>
    </location>
    <ligand>
        <name>NAD(+)</name>
        <dbReference type="ChEBI" id="CHEBI:57540"/>
    </ligand>
</feature>
<feature type="binding site" evidence="1">
    <location>
        <position position="395"/>
    </location>
    <ligand>
        <name>Zn(2+)</name>
        <dbReference type="ChEBI" id="CHEBI:29105"/>
    </ligand>
</feature>
<feature type="binding site" evidence="1">
    <location>
        <position position="398"/>
    </location>
    <ligand>
        <name>Zn(2+)</name>
        <dbReference type="ChEBI" id="CHEBI:29105"/>
    </ligand>
</feature>
<feature type="binding site" evidence="1">
    <location>
        <position position="413"/>
    </location>
    <ligand>
        <name>Zn(2+)</name>
        <dbReference type="ChEBI" id="CHEBI:29105"/>
    </ligand>
</feature>
<feature type="binding site" evidence="1">
    <location>
        <position position="418"/>
    </location>
    <ligand>
        <name>Zn(2+)</name>
        <dbReference type="ChEBI" id="CHEBI:29105"/>
    </ligand>
</feature>
<keyword id="KW-0227">DNA damage</keyword>
<keyword id="KW-0234">DNA repair</keyword>
<keyword id="KW-0235">DNA replication</keyword>
<keyword id="KW-0436">Ligase</keyword>
<keyword id="KW-0460">Magnesium</keyword>
<keyword id="KW-0464">Manganese</keyword>
<keyword id="KW-0479">Metal-binding</keyword>
<keyword id="KW-0520">NAD</keyword>
<keyword id="KW-0862">Zinc</keyword>
<accession>Q5LYL9</accession>
<name>DNLJ_STRT1</name>